<comment type="function">
    <text evidence="1">This protein is one of the early assembly proteins of the 50S ribosomal subunit, although it is not seen to bind rRNA by itself. It is important during the early stages of 50S assembly.</text>
</comment>
<comment type="subunit">
    <text evidence="1">Part of the 50S ribosomal subunit.</text>
</comment>
<comment type="similarity">
    <text evidence="1">Belongs to the universal ribosomal protein uL13 family.</text>
</comment>
<accession>Q1IU84</accession>
<gene>
    <name evidence="1" type="primary">rplM</name>
    <name type="ordered locus">Acid345_0561</name>
</gene>
<keyword id="KW-1185">Reference proteome</keyword>
<keyword id="KW-0687">Ribonucleoprotein</keyword>
<keyword id="KW-0689">Ribosomal protein</keyword>
<dbReference type="EMBL" id="CP000360">
    <property type="protein sequence ID" value="ABF39566.1"/>
    <property type="molecule type" value="Genomic_DNA"/>
</dbReference>
<dbReference type="RefSeq" id="WP_011521368.1">
    <property type="nucleotide sequence ID" value="NC_008009.1"/>
</dbReference>
<dbReference type="SMR" id="Q1IU84"/>
<dbReference type="STRING" id="204669.Acid345_0561"/>
<dbReference type="EnsemblBacteria" id="ABF39566">
    <property type="protein sequence ID" value="ABF39566"/>
    <property type="gene ID" value="Acid345_0561"/>
</dbReference>
<dbReference type="KEGG" id="aba:Acid345_0561"/>
<dbReference type="eggNOG" id="COG0102">
    <property type="taxonomic scope" value="Bacteria"/>
</dbReference>
<dbReference type="HOGENOM" id="CLU_082184_2_2_0"/>
<dbReference type="OrthoDB" id="9801330at2"/>
<dbReference type="Proteomes" id="UP000002432">
    <property type="component" value="Chromosome"/>
</dbReference>
<dbReference type="GO" id="GO:0022625">
    <property type="term" value="C:cytosolic large ribosomal subunit"/>
    <property type="evidence" value="ECO:0007669"/>
    <property type="project" value="TreeGrafter"/>
</dbReference>
<dbReference type="GO" id="GO:0003729">
    <property type="term" value="F:mRNA binding"/>
    <property type="evidence" value="ECO:0007669"/>
    <property type="project" value="TreeGrafter"/>
</dbReference>
<dbReference type="GO" id="GO:0003735">
    <property type="term" value="F:structural constituent of ribosome"/>
    <property type="evidence" value="ECO:0007669"/>
    <property type="project" value="InterPro"/>
</dbReference>
<dbReference type="GO" id="GO:0017148">
    <property type="term" value="P:negative regulation of translation"/>
    <property type="evidence" value="ECO:0007669"/>
    <property type="project" value="TreeGrafter"/>
</dbReference>
<dbReference type="GO" id="GO:0006412">
    <property type="term" value="P:translation"/>
    <property type="evidence" value="ECO:0007669"/>
    <property type="project" value="UniProtKB-UniRule"/>
</dbReference>
<dbReference type="CDD" id="cd00392">
    <property type="entry name" value="Ribosomal_L13"/>
    <property type="match status" value="1"/>
</dbReference>
<dbReference type="FunFam" id="3.90.1180.10:FF:000001">
    <property type="entry name" value="50S ribosomal protein L13"/>
    <property type="match status" value="1"/>
</dbReference>
<dbReference type="Gene3D" id="3.90.1180.10">
    <property type="entry name" value="Ribosomal protein L13"/>
    <property type="match status" value="1"/>
</dbReference>
<dbReference type="HAMAP" id="MF_01366">
    <property type="entry name" value="Ribosomal_uL13"/>
    <property type="match status" value="1"/>
</dbReference>
<dbReference type="InterPro" id="IPR005822">
    <property type="entry name" value="Ribosomal_uL13"/>
</dbReference>
<dbReference type="InterPro" id="IPR005823">
    <property type="entry name" value="Ribosomal_uL13_bac-type"/>
</dbReference>
<dbReference type="InterPro" id="IPR023563">
    <property type="entry name" value="Ribosomal_uL13_CS"/>
</dbReference>
<dbReference type="InterPro" id="IPR036899">
    <property type="entry name" value="Ribosomal_uL13_sf"/>
</dbReference>
<dbReference type="NCBIfam" id="TIGR01066">
    <property type="entry name" value="rplM_bact"/>
    <property type="match status" value="1"/>
</dbReference>
<dbReference type="PANTHER" id="PTHR11545:SF2">
    <property type="entry name" value="LARGE RIBOSOMAL SUBUNIT PROTEIN UL13M"/>
    <property type="match status" value="1"/>
</dbReference>
<dbReference type="PANTHER" id="PTHR11545">
    <property type="entry name" value="RIBOSOMAL PROTEIN L13"/>
    <property type="match status" value="1"/>
</dbReference>
<dbReference type="Pfam" id="PF00572">
    <property type="entry name" value="Ribosomal_L13"/>
    <property type="match status" value="1"/>
</dbReference>
<dbReference type="PIRSF" id="PIRSF002181">
    <property type="entry name" value="Ribosomal_L13"/>
    <property type="match status" value="1"/>
</dbReference>
<dbReference type="SUPFAM" id="SSF52161">
    <property type="entry name" value="Ribosomal protein L13"/>
    <property type="match status" value="1"/>
</dbReference>
<dbReference type="PROSITE" id="PS00783">
    <property type="entry name" value="RIBOSOMAL_L13"/>
    <property type="match status" value="1"/>
</dbReference>
<reference key="1">
    <citation type="journal article" date="2009" name="Appl. Environ. Microbiol.">
        <title>Three genomes from the phylum Acidobacteria provide insight into the lifestyles of these microorganisms in soils.</title>
        <authorList>
            <person name="Ward N.L."/>
            <person name="Challacombe J.F."/>
            <person name="Janssen P.H."/>
            <person name="Henrissat B."/>
            <person name="Coutinho P.M."/>
            <person name="Wu M."/>
            <person name="Xie G."/>
            <person name="Haft D.H."/>
            <person name="Sait M."/>
            <person name="Badger J."/>
            <person name="Barabote R.D."/>
            <person name="Bradley B."/>
            <person name="Brettin T.S."/>
            <person name="Brinkac L.M."/>
            <person name="Bruce D."/>
            <person name="Creasy T."/>
            <person name="Daugherty S.C."/>
            <person name="Davidsen T.M."/>
            <person name="DeBoy R.T."/>
            <person name="Detter J.C."/>
            <person name="Dodson R.J."/>
            <person name="Durkin A.S."/>
            <person name="Ganapathy A."/>
            <person name="Gwinn-Giglio M."/>
            <person name="Han C.S."/>
            <person name="Khouri H."/>
            <person name="Kiss H."/>
            <person name="Kothari S.P."/>
            <person name="Madupu R."/>
            <person name="Nelson K.E."/>
            <person name="Nelson W.C."/>
            <person name="Paulsen I."/>
            <person name="Penn K."/>
            <person name="Ren Q."/>
            <person name="Rosovitz M.J."/>
            <person name="Selengut J.D."/>
            <person name="Shrivastava S."/>
            <person name="Sullivan S.A."/>
            <person name="Tapia R."/>
            <person name="Thompson L.S."/>
            <person name="Watkins K.L."/>
            <person name="Yang Q."/>
            <person name="Yu C."/>
            <person name="Zafar N."/>
            <person name="Zhou L."/>
            <person name="Kuske C.R."/>
        </authorList>
    </citation>
    <scope>NUCLEOTIDE SEQUENCE [LARGE SCALE GENOMIC DNA]</scope>
    <source>
        <strain>Ellin345</strain>
    </source>
</reference>
<organism>
    <name type="scientific">Koribacter versatilis (strain Ellin345)</name>
    <dbReference type="NCBI Taxonomy" id="204669"/>
    <lineage>
        <taxon>Bacteria</taxon>
        <taxon>Pseudomonadati</taxon>
        <taxon>Acidobacteriota</taxon>
        <taxon>Terriglobia</taxon>
        <taxon>Terriglobales</taxon>
        <taxon>Candidatus Korobacteraceae</taxon>
        <taxon>Candidatus Korobacter</taxon>
    </lineage>
</organism>
<protein>
    <recommendedName>
        <fullName evidence="1">Large ribosomal subunit protein uL13</fullName>
    </recommendedName>
    <alternativeName>
        <fullName evidence="2">50S ribosomal protein L13</fullName>
    </alternativeName>
</protein>
<proteinExistence type="inferred from homology"/>
<feature type="chain" id="PRO_0000261673" description="Large ribosomal subunit protein uL13">
    <location>
        <begin position="1"/>
        <end position="142"/>
    </location>
</feature>
<name>RL13_KORVE</name>
<sequence length="142" mass="15871">MSTYFPKGEVARKWFVVDADGQTLGRLASRVARILSGKDNPKYTPFIDTGDHVVVINAEKIKITGLKADNKKYYHYSGYPGGMKEEEFLKRLERRPELILETAIKGMLPKSKLGKAMGGKLKVYRGADHPHIAQKPEVLANA</sequence>
<evidence type="ECO:0000255" key="1">
    <source>
        <dbReference type="HAMAP-Rule" id="MF_01366"/>
    </source>
</evidence>
<evidence type="ECO:0000305" key="2"/>